<feature type="chain" id="PRO_0000141445" description="4-hydroxy-tetrahydrodipicolinate reductase">
    <location>
        <begin position="1"/>
        <end position="254"/>
    </location>
</feature>
<feature type="active site" description="Proton donor/acceptor" evidence="1">
    <location>
        <position position="147"/>
    </location>
</feature>
<feature type="active site" description="Proton donor" evidence="1">
    <location>
        <position position="151"/>
    </location>
</feature>
<feature type="binding site" evidence="1">
    <location>
        <begin position="7"/>
        <end position="12"/>
    </location>
    <ligand>
        <name>NAD(+)</name>
        <dbReference type="ChEBI" id="CHEBI:57540"/>
    </ligand>
</feature>
<feature type="binding site" evidence="1">
    <location>
        <position position="35"/>
    </location>
    <ligand>
        <name>NADP(+)</name>
        <dbReference type="ChEBI" id="CHEBI:58349"/>
    </ligand>
</feature>
<feature type="binding site" evidence="1">
    <location>
        <begin position="91"/>
        <end position="93"/>
    </location>
    <ligand>
        <name>NAD(+)</name>
        <dbReference type="ChEBI" id="CHEBI:57540"/>
    </ligand>
</feature>
<feature type="binding site" evidence="1">
    <location>
        <begin position="115"/>
        <end position="118"/>
    </location>
    <ligand>
        <name>NAD(+)</name>
        <dbReference type="ChEBI" id="CHEBI:57540"/>
    </ligand>
</feature>
<feature type="binding site" evidence="1">
    <location>
        <position position="148"/>
    </location>
    <ligand>
        <name>(S)-2,3,4,5-tetrahydrodipicolinate</name>
        <dbReference type="ChEBI" id="CHEBI:16845"/>
    </ligand>
</feature>
<feature type="binding site" evidence="1">
    <location>
        <begin position="157"/>
        <end position="158"/>
    </location>
    <ligand>
        <name>(S)-2,3,4,5-tetrahydrodipicolinate</name>
        <dbReference type="ChEBI" id="CHEBI:16845"/>
    </ligand>
</feature>
<feature type="sequence conflict" description="In Ref. 1; AAB39718." evidence="2" ref="1">
    <original>G</original>
    <variation>E</variation>
    <location>
        <position position="22"/>
    </location>
</feature>
<feature type="sequence conflict" description="In Ref. 1; AAB39718." evidence="2" ref="1">
    <original>A</original>
    <variation>V</variation>
    <location>
        <position position="28"/>
    </location>
</feature>
<feature type="sequence conflict" description="In Ref. 1; AAB39718." evidence="2" ref="1">
    <original>S</original>
    <variation>A</variation>
    <location>
        <position position="44"/>
    </location>
</feature>
<feature type="sequence conflict" description="In Ref. 1; AAB39718." evidence="2" ref="1">
    <original>N</original>
    <variation>H</variation>
    <location>
        <position position="76"/>
    </location>
</feature>
<feature type="sequence conflict" description="In Ref. 1; AAB39718." evidence="2" ref="1">
    <original>A</original>
    <variation>T</variation>
    <location>
        <position position="80"/>
    </location>
</feature>
<feature type="sequence conflict" description="In Ref. 1; AAB39718." evidence="2" ref="1">
    <original>Q</original>
    <variation>K</variation>
    <location>
        <position position="104"/>
    </location>
</feature>
<feature type="sequence conflict" description="In Ref. 1; AAB39718." evidence="2" ref="1">
    <original>A</original>
    <variation>V</variation>
    <location>
        <position position="115"/>
    </location>
</feature>
<feature type="sequence conflict" description="In Ref. 1; AAB39718." evidence="2" ref="1">
    <original>I</original>
    <variation>L</variation>
    <location>
        <position position="120"/>
    </location>
</feature>
<feature type="sequence conflict" description="In Ref. 1; AAB39718." evidence="2" ref="1">
    <original>T</original>
    <variation>A</variation>
    <location>
        <position position="132"/>
    </location>
</feature>
<feature type="sequence conflict" description="In Ref. 1; AAB39718." evidence="2" ref="1">
    <original>I</original>
    <variation>V</variation>
    <location>
        <position position="144"/>
    </location>
</feature>
<feature type="sequence conflict" description="In Ref. 1; AAB39718." evidence="2" ref="1">
    <original>I</original>
    <variation>A</variation>
    <location>
        <position position="154"/>
    </location>
</feature>
<feature type="sequence conflict" description="In Ref. 1; AAB39718." evidence="2" ref="1">
    <original>I</original>
    <variation>T</variation>
    <location>
        <position position="179"/>
    </location>
</feature>
<gene>
    <name evidence="1" type="primary">dapB</name>
    <name type="ordered locus">HP_0510</name>
</gene>
<accession>P94844</accession>
<sequence>MKIGVYGASGRIGKLLLEELKGGYKGLALSSVFVRQKCETDFSSFSHAPLVTNDLKAFVRACECVIDFSLPKGVDNLLEALLECPKILVSGTTGLEKETLEKMQQLALKAPLLHAHNMSIGIMMLNQLAFLTSLKLKDADIEIIETHHNLKKDIPSGTALSLYETCAKARGYDEKNALITHREGLRSKESIGIAALRGGDVAGKHTIGFYLEGEYIELSHTATNRSIFAKGALEVALWLKDKAAKKYEINEMFG</sequence>
<protein>
    <recommendedName>
        <fullName evidence="1">4-hydroxy-tetrahydrodipicolinate reductase</fullName>
        <shortName evidence="1">HTPA reductase</shortName>
        <ecNumber evidence="1">1.17.1.8</ecNumber>
    </recommendedName>
</protein>
<organism>
    <name type="scientific">Helicobacter pylori (strain ATCC 700392 / 26695)</name>
    <name type="common">Campylobacter pylori</name>
    <dbReference type="NCBI Taxonomy" id="85962"/>
    <lineage>
        <taxon>Bacteria</taxon>
        <taxon>Pseudomonadati</taxon>
        <taxon>Campylobacterota</taxon>
        <taxon>Epsilonproteobacteria</taxon>
        <taxon>Campylobacterales</taxon>
        <taxon>Helicobacteraceae</taxon>
        <taxon>Helicobacter</taxon>
    </lineage>
</organism>
<keyword id="KW-0028">Amino-acid biosynthesis</keyword>
<keyword id="KW-0963">Cytoplasm</keyword>
<keyword id="KW-0220">Diaminopimelate biosynthesis</keyword>
<keyword id="KW-0457">Lysine biosynthesis</keyword>
<keyword id="KW-0520">NAD</keyword>
<keyword id="KW-0521">NADP</keyword>
<keyword id="KW-0560">Oxidoreductase</keyword>
<keyword id="KW-1185">Reference proteome</keyword>
<evidence type="ECO:0000255" key="1">
    <source>
        <dbReference type="HAMAP-Rule" id="MF_00102"/>
    </source>
</evidence>
<evidence type="ECO:0000305" key="2"/>
<proteinExistence type="evidence at protein level"/>
<reference key="1">
    <citation type="submission" date="1997-01" db="EMBL/GenBank/DDBJ databases">
        <title>Sequence of the dihydrodipicolinate reductase gene (dapB) from Helicobacter pylori and complementation in Escherichia coli.</title>
        <authorList>
            <person name="Clairoux N."/>
            <person name="Boissinot M."/>
        </authorList>
    </citation>
    <scope>NUCLEOTIDE SEQUENCE [GENOMIC DNA]</scope>
    <source>
        <strain>DSM 4867 / CCUG 17874 / NCTC 11638</strain>
    </source>
</reference>
<reference key="2">
    <citation type="journal article" date="1997" name="Nature">
        <title>The complete genome sequence of the gastric pathogen Helicobacter pylori.</title>
        <authorList>
            <person name="Tomb J.-F."/>
            <person name="White O."/>
            <person name="Kerlavage A.R."/>
            <person name="Clayton R.A."/>
            <person name="Sutton G.G."/>
            <person name="Fleischmann R.D."/>
            <person name="Ketchum K.A."/>
            <person name="Klenk H.-P."/>
            <person name="Gill S.R."/>
            <person name="Dougherty B.A."/>
            <person name="Nelson K.E."/>
            <person name="Quackenbush J."/>
            <person name="Zhou L."/>
            <person name="Kirkness E.F."/>
            <person name="Peterson S.N."/>
            <person name="Loftus B.J."/>
            <person name="Richardson D.L."/>
            <person name="Dodson R.J."/>
            <person name="Khalak H.G."/>
            <person name="Glodek A."/>
            <person name="McKenney K."/>
            <person name="FitzGerald L.M."/>
            <person name="Lee N."/>
            <person name="Adams M.D."/>
            <person name="Hickey E.K."/>
            <person name="Berg D.E."/>
            <person name="Gocayne J.D."/>
            <person name="Utterback T.R."/>
            <person name="Peterson J.D."/>
            <person name="Kelley J.M."/>
            <person name="Cotton M.D."/>
            <person name="Weidman J.F."/>
            <person name="Fujii C."/>
            <person name="Bowman C."/>
            <person name="Watthey L."/>
            <person name="Wallin E."/>
            <person name="Hayes W.S."/>
            <person name="Borodovsky M."/>
            <person name="Karp P.D."/>
            <person name="Smith H.O."/>
            <person name="Fraser C.M."/>
            <person name="Venter J.C."/>
        </authorList>
    </citation>
    <scope>NUCLEOTIDE SEQUENCE [LARGE SCALE GENOMIC DNA]</scope>
    <source>
        <strain>ATCC 700392 / 26695</strain>
    </source>
</reference>
<comment type="function">
    <text evidence="1">Catalyzes the conversion of 4-hydroxy-tetrahydrodipicolinate (HTPA) to tetrahydrodipicolinate.</text>
</comment>
<comment type="catalytic activity">
    <reaction evidence="1">
        <text>(S)-2,3,4,5-tetrahydrodipicolinate + NAD(+) + H2O = (2S,4S)-4-hydroxy-2,3,4,5-tetrahydrodipicolinate + NADH + H(+)</text>
        <dbReference type="Rhea" id="RHEA:35323"/>
        <dbReference type="ChEBI" id="CHEBI:15377"/>
        <dbReference type="ChEBI" id="CHEBI:15378"/>
        <dbReference type="ChEBI" id="CHEBI:16845"/>
        <dbReference type="ChEBI" id="CHEBI:57540"/>
        <dbReference type="ChEBI" id="CHEBI:57945"/>
        <dbReference type="ChEBI" id="CHEBI:67139"/>
        <dbReference type="EC" id="1.17.1.8"/>
    </reaction>
</comment>
<comment type="catalytic activity">
    <reaction evidence="1">
        <text>(S)-2,3,4,5-tetrahydrodipicolinate + NADP(+) + H2O = (2S,4S)-4-hydroxy-2,3,4,5-tetrahydrodipicolinate + NADPH + H(+)</text>
        <dbReference type="Rhea" id="RHEA:35331"/>
        <dbReference type="ChEBI" id="CHEBI:15377"/>
        <dbReference type="ChEBI" id="CHEBI:15378"/>
        <dbReference type="ChEBI" id="CHEBI:16845"/>
        <dbReference type="ChEBI" id="CHEBI:57783"/>
        <dbReference type="ChEBI" id="CHEBI:58349"/>
        <dbReference type="ChEBI" id="CHEBI:67139"/>
        <dbReference type="EC" id="1.17.1.8"/>
    </reaction>
</comment>
<comment type="pathway">
    <text evidence="1">Amino-acid biosynthesis; L-lysine biosynthesis via DAP pathway; (S)-tetrahydrodipicolinate from L-aspartate: step 4/4.</text>
</comment>
<comment type="interaction">
    <interactant intactId="EBI-7497752">
        <id>P94844</id>
    </interactant>
    <interactant intactId="EBI-7497815">
        <id>O25114</id>
        <label>HP_0347</label>
    </interactant>
    <organismsDiffer>false</organismsDiffer>
    <experiments>3</experiments>
</comment>
<comment type="subcellular location">
    <subcellularLocation>
        <location evidence="1">Cytoplasm</location>
    </subcellularLocation>
</comment>
<comment type="similarity">
    <text evidence="1">Belongs to the DapB family.</text>
</comment>
<comment type="caution">
    <text evidence="2">Was originally thought to be a dihydrodipicolinate reductase (DHDPR), catalyzing the conversion of dihydrodipicolinate to tetrahydrodipicolinate. However, it was shown in E.coli that the substrate of the enzymatic reaction is not dihydrodipicolinate (DHDP) but in fact (2S,4S)-4-hydroxy-2,3,4,5-tetrahydrodipicolinic acid (HTPA), the product released by the DapA-catalyzed reaction.</text>
</comment>
<name>DAPB_HELPY</name>
<dbReference type="EC" id="1.17.1.8" evidence="1"/>
<dbReference type="EMBL" id="U75328">
    <property type="protein sequence ID" value="AAB39718.1"/>
    <property type="molecule type" value="Genomic_DNA"/>
</dbReference>
<dbReference type="EMBL" id="AE000511">
    <property type="protein sequence ID" value="AAD07574.1"/>
    <property type="molecule type" value="Genomic_DNA"/>
</dbReference>
<dbReference type="PIR" id="F64583">
    <property type="entry name" value="F64583"/>
</dbReference>
<dbReference type="RefSeq" id="NP_207307.1">
    <property type="nucleotide sequence ID" value="NC_000915.1"/>
</dbReference>
<dbReference type="RefSeq" id="WP_000690507.1">
    <property type="nucleotide sequence ID" value="NC_018939.1"/>
</dbReference>
<dbReference type="SMR" id="P94844"/>
<dbReference type="DIP" id="DIP-3440N"/>
<dbReference type="FunCoup" id="P94844">
    <property type="interactions" value="365"/>
</dbReference>
<dbReference type="IntAct" id="P94844">
    <property type="interactions" value="1"/>
</dbReference>
<dbReference type="MINT" id="P94844"/>
<dbReference type="STRING" id="85962.HP_0510"/>
<dbReference type="PaxDb" id="85962-C694_02620"/>
<dbReference type="EnsemblBacteria" id="AAD07574">
    <property type="protein sequence ID" value="AAD07574"/>
    <property type="gene ID" value="HP_0510"/>
</dbReference>
<dbReference type="KEGG" id="heo:C694_02620"/>
<dbReference type="KEGG" id="hpy:HP_0510"/>
<dbReference type="PATRIC" id="fig|85962.47.peg.548"/>
<dbReference type="eggNOG" id="COG0289">
    <property type="taxonomic scope" value="Bacteria"/>
</dbReference>
<dbReference type="InParanoid" id="P94844"/>
<dbReference type="OrthoDB" id="9790352at2"/>
<dbReference type="PhylomeDB" id="P94844"/>
<dbReference type="UniPathway" id="UPA00034">
    <property type="reaction ID" value="UER00018"/>
</dbReference>
<dbReference type="Proteomes" id="UP000000429">
    <property type="component" value="Chromosome"/>
</dbReference>
<dbReference type="GO" id="GO:0005829">
    <property type="term" value="C:cytosol"/>
    <property type="evidence" value="ECO:0000318"/>
    <property type="project" value="GO_Central"/>
</dbReference>
<dbReference type="GO" id="GO:0008839">
    <property type="term" value="F:4-hydroxy-tetrahydrodipicolinate reductase"/>
    <property type="evidence" value="ECO:0000318"/>
    <property type="project" value="GO_Central"/>
</dbReference>
<dbReference type="GO" id="GO:0051287">
    <property type="term" value="F:NAD binding"/>
    <property type="evidence" value="ECO:0007669"/>
    <property type="project" value="UniProtKB-UniRule"/>
</dbReference>
<dbReference type="GO" id="GO:0050661">
    <property type="term" value="F:NADP binding"/>
    <property type="evidence" value="ECO:0007669"/>
    <property type="project" value="UniProtKB-UniRule"/>
</dbReference>
<dbReference type="GO" id="GO:0016726">
    <property type="term" value="F:oxidoreductase activity, acting on CH or CH2 groups, NAD or NADP as acceptor"/>
    <property type="evidence" value="ECO:0007669"/>
    <property type="project" value="UniProtKB-UniRule"/>
</dbReference>
<dbReference type="GO" id="GO:0019877">
    <property type="term" value="P:diaminopimelate biosynthetic process"/>
    <property type="evidence" value="ECO:0000318"/>
    <property type="project" value="GO_Central"/>
</dbReference>
<dbReference type="GO" id="GO:0009089">
    <property type="term" value="P:lysine biosynthetic process via diaminopimelate"/>
    <property type="evidence" value="ECO:0007669"/>
    <property type="project" value="UniProtKB-UniRule"/>
</dbReference>
<dbReference type="CDD" id="cd02274">
    <property type="entry name" value="DHDPR_N"/>
    <property type="match status" value="1"/>
</dbReference>
<dbReference type="Gene3D" id="3.30.360.10">
    <property type="entry name" value="Dihydrodipicolinate Reductase, domain 2"/>
    <property type="match status" value="1"/>
</dbReference>
<dbReference type="Gene3D" id="3.40.50.720">
    <property type="entry name" value="NAD(P)-binding Rossmann-like Domain"/>
    <property type="match status" value="1"/>
</dbReference>
<dbReference type="HAMAP" id="MF_00102">
    <property type="entry name" value="DapB"/>
    <property type="match status" value="1"/>
</dbReference>
<dbReference type="InterPro" id="IPR022663">
    <property type="entry name" value="DapB_C"/>
</dbReference>
<dbReference type="InterPro" id="IPR000846">
    <property type="entry name" value="DapB_N"/>
</dbReference>
<dbReference type="InterPro" id="IPR022664">
    <property type="entry name" value="DapB_N_CS"/>
</dbReference>
<dbReference type="InterPro" id="IPR023940">
    <property type="entry name" value="DHDPR_bac"/>
</dbReference>
<dbReference type="InterPro" id="IPR036291">
    <property type="entry name" value="NAD(P)-bd_dom_sf"/>
</dbReference>
<dbReference type="NCBIfam" id="TIGR00036">
    <property type="entry name" value="dapB"/>
    <property type="match status" value="1"/>
</dbReference>
<dbReference type="PANTHER" id="PTHR20836:SF0">
    <property type="entry name" value="4-HYDROXY-TETRAHYDRODIPICOLINATE REDUCTASE 1, CHLOROPLASTIC-RELATED"/>
    <property type="match status" value="1"/>
</dbReference>
<dbReference type="PANTHER" id="PTHR20836">
    <property type="entry name" value="DIHYDRODIPICOLINATE REDUCTASE"/>
    <property type="match status" value="1"/>
</dbReference>
<dbReference type="Pfam" id="PF05173">
    <property type="entry name" value="DapB_C"/>
    <property type="match status" value="1"/>
</dbReference>
<dbReference type="Pfam" id="PF01113">
    <property type="entry name" value="DapB_N"/>
    <property type="match status" value="1"/>
</dbReference>
<dbReference type="PIRSF" id="PIRSF000161">
    <property type="entry name" value="DHPR"/>
    <property type="match status" value="1"/>
</dbReference>
<dbReference type="SUPFAM" id="SSF55347">
    <property type="entry name" value="Glyceraldehyde-3-phosphate dehydrogenase-like, C-terminal domain"/>
    <property type="match status" value="1"/>
</dbReference>
<dbReference type="SUPFAM" id="SSF51735">
    <property type="entry name" value="NAD(P)-binding Rossmann-fold domains"/>
    <property type="match status" value="1"/>
</dbReference>
<dbReference type="PROSITE" id="PS01298">
    <property type="entry name" value="DAPB"/>
    <property type="match status" value="1"/>
</dbReference>